<protein>
    <recommendedName>
        <fullName evidence="3">Large ribosomal subunit protein uL24</fullName>
    </recommendedName>
    <alternativeName>
        <fullName>60S ribosomal protein L26</fullName>
    </alternativeName>
</protein>
<comment type="function">
    <text evidence="1">Component of the large ribosomal subunit. The ribosome is a large ribonucleoprotein complex responsible for the synthesis of proteins in the cell.</text>
</comment>
<comment type="subunit">
    <text evidence="1">Component of the large ribosomal subunit. Interacts with DHX33.</text>
</comment>
<comment type="subcellular location">
    <subcellularLocation>
        <location evidence="1">Cytoplasm</location>
    </subcellularLocation>
</comment>
<comment type="PTM">
    <text evidence="1">Ufmylated by UFL1 in response to endoplasmic reticulum stress, promoting reticulophagy of endoplasmic reticulum sheets.</text>
</comment>
<comment type="similarity">
    <text evidence="3">Belongs to the universal ribosomal protein uL24 family.</text>
</comment>
<evidence type="ECO:0000250" key="1">
    <source>
        <dbReference type="UniProtKB" id="P61254"/>
    </source>
</evidence>
<evidence type="ECO:0000256" key="2">
    <source>
        <dbReference type="SAM" id="MobiDB-lite"/>
    </source>
</evidence>
<evidence type="ECO:0000305" key="3"/>
<accession>P12749</accession>
<reference key="1">
    <citation type="journal article" date="1989" name="FEBS Lett.">
        <title>The primary structure of rat ribosomal protein L26.</title>
        <authorList>
            <person name="Paz V."/>
            <person name="Olvera J."/>
            <person name="Chan Y.-L."/>
            <person name="Wool I.G."/>
        </authorList>
    </citation>
    <scope>NUCLEOTIDE SEQUENCE [MRNA]</scope>
    <scope>PROTEIN SEQUENCE OF 1-13</scope>
    <source>
        <strain>Sprague-Dawley</strain>
        <tissue>Liver</tissue>
    </source>
</reference>
<sequence>MKFNPFVTSDRSKNRKRHFNAPSHIRRKIMSSPLSKELRQKYNVRSMPIRKDDEVQVVRGHYKGQQIGKVVQVYRKKYVIYIERVQREKANGTTVHVGIRPSKVVITRLKLDKDRKKILERKAKSRQVGKEKGKYKEETIEKMQE</sequence>
<dbReference type="EMBL" id="X14671">
    <property type="protein sequence ID" value="CAA32801.1"/>
    <property type="molecule type" value="mRNA"/>
</dbReference>
<dbReference type="PIR" id="S05024">
    <property type="entry name" value="R5RT26"/>
</dbReference>
<dbReference type="PDB" id="7QGG">
    <property type="method" value="EM"/>
    <property type="resolution" value="2.86 A"/>
    <property type="chains" value="Z=1-145"/>
</dbReference>
<dbReference type="PDBsum" id="7QGG"/>
<dbReference type="EMDB" id="EMD-13954"/>
<dbReference type="SMR" id="P12749"/>
<dbReference type="FunCoup" id="P12749">
    <property type="interactions" value="677"/>
</dbReference>
<dbReference type="IntAct" id="P12749">
    <property type="interactions" value="3"/>
</dbReference>
<dbReference type="MINT" id="P12749"/>
<dbReference type="STRING" id="10116.ENSRNOP00000071514"/>
<dbReference type="iPTMnet" id="P12749"/>
<dbReference type="PhosphoSitePlus" id="P12749"/>
<dbReference type="jPOST" id="P12749"/>
<dbReference type="PaxDb" id="10116-ENSRNOP00000005588"/>
<dbReference type="UCSC" id="RGD:1310607">
    <property type="organism name" value="rat"/>
</dbReference>
<dbReference type="AGR" id="RGD:1310607"/>
<dbReference type="RGD" id="1310607">
    <property type="gene designation" value="Rpl26"/>
</dbReference>
<dbReference type="eggNOG" id="KOG3401">
    <property type="taxonomic scope" value="Eukaryota"/>
</dbReference>
<dbReference type="InParanoid" id="P12749"/>
<dbReference type="PhylomeDB" id="P12749"/>
<dbReference type="Reactome" id="R-RNO-156827">
    <property type="pathway name" value="L13a-mediated translational silencing of Ceruloplasmin expression"/>
</dbReference>
<dbReference type="Reactome" id="R-RNO-1799339">
    <property type="pathway name" value="SRP-dependent cotranslational protein targeting to membrane"/>
</dbReference>
<dbReference type="Reactome" id="R-RNO-6791226">
    <property type="pathway name" value="Major pathway of rRNA processing in the nucleolus and cytosol"/>
</dbReference>
<dbReference type="Reactome" id="R-RNO-72689">
    <property type="pathway name" value="Formation of a pool of free 40S subunits"/>
</dbReference>
<dbReference type="Reactome" id="R-RNO-72706">
    <property type="pathway name" value="GTP hydrolysis and joining of the 60S ribosomal subunit"/>
</dbReference>
<dbReference type="Reactome" id="R-RNO-975956">
    <property type="pathway name" value="Nonsense Mediated Decay (NMD) independent of the Exon Junction Complex (EJC)"/>
</dbReference>
<dbReference type="Reactome" id="R-RNO-975957">
    <property type="pathway name" value="Nonsense Mediated Decay (NMD) enhanced by the Exon Junction Complex (EJC)"/>
</dbReference>
<dbReference type="PRO" id="PR:P12749"/>
<dbReference type="Proteomes" id="UP000002494">
    <property type="component" value="Unplaced"/>
</dbReference>
<dbReference type="GO" id="GO:0005737">
    <property type="term" value="C:cytoplasm"/>
    <property type="evidence" value="ECO:0000266"/>
    <property type="project" value="RGD"/>
</dbReference>
<dbReference type="GO" id="GO:0022625">
    <property type="term" value="C:cytosolic large ribosomal subunit"/>
    <property type="evidence" value="ECO:0000314"/>
    <property type="project" value="RGD"/>
</dbReference>
<dbReference type="GO" id="GO:0022626">
    <property type="term" value="C:cytosolic ribosome"/>
    <property type="evidence" value="ECO:0000266"/>
    <property type="project" value="RGD"/>
</dbReference>
<dbReference type="GO" id="GO:0005730">
    <property type="term" value="C:nucleolus"/>
    <property type="evidence" value="ECO:0000266"/>
    <property type="project" value="RGD"/>
</dbReference>
<dbReference type="GO" id="GO:0005654">
    <property type="term" value="C:nucleoplasm"/>
    <property type="evidence" value="ECO:0000266"/>
    <property type="project" value="RGD"/>
</dbReference>
<dbReference type="GO" id="GO:1990904">
    <property type="term" value="C:ribonucleoprotein complex"/>
    <property type="evidence" value="ECO:0000266"/>
    <property type="project" value="RGD"/>
</dbReference>
<dbReference type="GO" id="GO:0045202">
    <property type="term" value="C:synapse"/>
    <property type="evidence" value="ECO:0000266"/>
    <property type="project" value="RGD"/>
</dbReference>
<dbReference type="GO" id="GO:0043195">
    <property type="term" value="C:terminal bouton"/>
    <property type="evidence" value="ECO:0000314"/>
    <property type="project" value="RGD"/>
</dbReference>
<dbReference type="GO" id="GO:0048027">
    <property type="term" value="F:mRNA 5'-UTR binding"/>
    <property type="evidence" value="ECO:0000266"/>
    <property type="project" value="RGD"/>
</dbReference>
<dbReference type="GO" id="GO:0003723">
    <property type="term" value="F:RNA binding"/>
    <property type="evidence" value="ECO:0000318"/>
    <property type="project" value="GO_Central"/>
</dbReference>
<dbReference type="GO" id="GO:0003735">
    <property type="term" value="F:structural constituent of ribosome"/>
    <property type="evidence" value="ECO:0000266"/>
    <property type="project" value="RGD"/>
</dbReference>
<dbReference type="GO" id="GO:0071480">
    <property type="term" value="P:cellular response to gamma radiation"/>
    <property type="evidence" value="ECO:0000266"/>
    <property type="project" value="RGD"/>
</dbReference>
<dbReference type="GO" id="GO:0071479">
    <property type="term" value="P:cellular response to ionizing radiation"/>
    <property type="evidence" value="ECO:0000266"/>
    <property type="project" value="RGD"/>
</dbReference>
<dbReference type="GO" id="GO:0034644">
    <property type="term" value="P:cellular response to UV"/>
    <property type="evidence" value="ECO:0000266"/>
    <property type="project" value="RGD"/>
</dbReference>
<dbReference type="GO" id="GO:0002181">
    <property type="term" value="P:cytoplasmic translation"/>
    <property type="evidence" value="ECO:0000318"/>
    <property type="project" value="GO_Central"/>
</dbReference>
<dbReference type="GO" id="GO:0030330">
    <property type="term" value="P:DNA damage response, signal transduction by p53 class mediator"/>
    <property type="evidence" value="ECO:0000266"/>
    <property type="project" value="RGD"/>
</dbReference>
<dbReference type="GO" id="GO:0043517">
    <property type="term" value="P:positive regulation of DNA damage response, signal transduction by p53 class mediator"/>
    <property type="evidence" value="ECO:0000266"/>
    <property type="project" value="RGD"/>
</dbReference>
<dbReference type="GO" id="GO:1902167">
    <property type="term" value="P:positive regulation of intrinsic apoptotic signaling pathway in response to DNA damage by p53 class mediator"/>
    <property type="evidence" value="ECO:0000266"/>
    <property type="project" value="RGD"/>
</dbReference>
<dbReference type="GO" id="GO:0045727">
    <property type="term" value="P:positive regulation of translation"/>
    <property type="evidence" value="ECO:0000266"/>
    <property type="project" value="RGD"/>
</dbReference>
<dbReference type="GO" id="GO:1904803">
    <property type="term" value="P:regulation of translation involved in cellular response to UV"/>
    <property type="evidence" value="ECO:0000266"/>
    <property type="project" value="RGD"/>
</dbReference>
<dbReference type="GO" id="GO:1990928">
    <property type="term" value="P:response to amino acid starvation"/>
    <property type="evidence" value="ECO:0000270"/>
    <property type="project" value="RGD"/>
</dbReference>
<dbReference type="GO" id="GO:0042273">
    <property type="term" value="P:ribosomal large subunit biogenesis"/>
    <property type="evidence" value="ECO:0000266"/>
    <property type="project" value="RGD"/>
</dbReference>
<dbReference type="GO" id="GO:0006364">
    <property type="term" value="P:rRNA processing"/>
    <property type="evidence" value="ECO:0000266"/>
    <property type="project" value="RGD"/>
</dbReference>
<dbReference type="CDD" id="cd06089">
    <property type="entry name" value="KOW_RPL26"/>
    <property type="match status" value="1"/>
</dbReference>
<dbReference type="FunFam" id="2.30.30.30:FF:000009">
    <property type="entry name" value="60S ribosomal protein L26"/>
    <property type="match status" value="1"/>
</dbReference>
<dbReference type="Gene3D" id="2.30.30.30">
    <property type="match status" value="1"/>
</dbReference>
<dbReference type="HAMAP" id="MF_01326_A">
    <property type="entry name" value="Ribosomal_uL24_A"/>
    <property type="match status" value="1"/>
</dbReference>
<dbReference type="InterPro" id="IPR005824">
    <property type="entry name" value="KOW"/>
</dbReference>
<dbReference type="InterPro" id="IPR014722">
    <property type="entry name" value="Rib_uL2_dom2"/>
</dbReference>
<dbReference type="InterPro" id="IPR005825">
    <property type="entry name" value="Ribosomal_uL24_CS"/>
</dbReference>
<dbReference type="InterPro" id="IPR005756">
    <property type="entry name" value="Ribosomal_uL24_euk/arc"/>
</dbReference>
<dbReference type="InterPro" id="IPR041988">
    <property type="entry name" value="Ribosomal_uL24_KOW"/>
</dbReference>
<dbReference type="InterPro" id="IPR008991">
    <property type="entry name" value="Translation_prot_SH3-like_sf"/>
</dbReference>
<dbReference type="NCBIfam" id="TIGR01080">
    <property type="entry name" value="rplX_A_E"/>
    <property type="match status" value="1"/>
</dbReference>
<dbReference type="PANTHER" id="PTHR11143">
    <property type="entry name" value="60S RIBOSOMAL PROTEIN L26 FAMILY MEMBER"/>
    <property type="match status" value="1"/>
</dbReference>
<dbReference type="Pfam" id="PF00467">
    <property type="entry name" value="KOW"/>
    <property type="match status" value="1"/>
</dbReference>
<dbReference type="Pfam" id="PF16906">
    <property type="entry name" value="Ribosomal_L26"/>
    <property type="match status" value="1"/>
</dbReference>
<dbReference type="SMART" id="SM00739">
    <property type="entry name" value="KOW"/>
    <property type="match status" value="1"/>
</dbReference>
<dbReference type="SUPFAM" id="SSF50104">
    <property type="entry name" value="Translation proteins SH3-like domain"/>
    <property type="match status" value="1"/>
</dbReference>
<dbReference type="PROSITE" id="PS01108">
    <property type="entry name" value="RIBOSOMAL_L24"/>
    <property type="match status" value="1"/>
</dbReference>
<proteinExistence type="evidence at protein level"/>
<name>RL26_RAT</name>
<keyword id="KW-0002">3D-structure</keyword>
<keyword id="KW-0963">Cytoplasm</keyword>
<keyword id="KW-0903">Direct protein sequencing</keyword>
<keyword id="KW-1017">Isopeptide bond</keyword>
<keyword id="KW-0597">Phosphoprotein</keyword>
<keyword id="KW-1185">Reference proteome</keyword>
<keyword id="KW-0687">Ribonucleoprotein</keyword>
<keyword id="KW-0689">Ribosomal protein</keyword>
<keyword id="KW-0832">Ubl conjugation</keyword>
<feature type="chain" id="PRO_0000130790" description="Large ribosomal subunit protein uL24">
    <location>
        <begin position="1"/>
        <end position="145"/>
    </location>
</feature>
<feature type="region of interest" description="Disordered" evidence="2">
    <location>
        <begin position="1"/>
        <end position="21"/>
    </location>
</feature>
<feature type="region of interest" description="Disordered" evidence="2">
    <location>
        <begin position="122"/>
        <end position="145"/>
    </location>
</feature>
<feature type="modified residue" description="Phosphothreonine" evidence="1">
    <location>
        <position position="139"/>
    </location>
</feature>
<feature type="cross-link" description="Glycyl lysine isopeptide (Lys-Gly) (interchain with G-Cter in SUMO2)" evidence="1">
    <location>
        <position position="136"/>
    </location>
</feature>
<organism>
    <name type="scientific">Rattus norvegicus</name>
    <name type="common">Rat</name>
    <dbReference type="NCBI Taxonomy" id="10116"/>
    <lineage>
        <taxon>Eukaryota</taxon>
        <taxon>Metazoa</taxon>
        <taxon>Chordata</taxon>
        <taxon>Craniata</taxon>
        <taxon>Vertebrata</taxon>
        <taxon>Euteleostomi</taxon>
        <taxon>Mammalia</taxon>
        <taxon>Eutheria</taxon>
        <taxon>Euarchontoglires</taxon>
        <taxon>Glires</taxon>
        <taxon>Rodentia</taxon>
        <taxon>Myomorpha</taxon>
        <taxon>Muroidea</taxon>
        <taxon>Muridae</taxon>
        <taxon>Murinae</taxon>
        <taxon>Rattus</taxon>
    </lineage>
</organism>
<gene>
    <name type="primary">Rpl26</name>
</gene>